<feature type="chain" id="PRO_1000138757" description="Orotate phosphoribosyltransferase">
    <location>
        <begin position="1"/>
        <end position="213"/>
    </location>
</feature>
<feature type="binding site" description="in other chain" evidence="1">
    <location>
        <position position="26"/>
    </location>
    <ligand>
        <name>5-phospho-alpha-D-ribose 1-diphosphate</name>
        <dbReference type="ChEBI" id="CHEBI:58017"/>
        <note>ligand shared between dimeric partners</note>
    </ligand>
</feature>
<feature type="binding site" evidence="1">
    <location>
        <begin position="34"/>
        <end position="35"/>
    </location>
    <ligand>
        <name>orotate</name>
        <dbReference type="ChEBI" id="CHEBI:30839"/>
    </ligand>
</feature>
<feature type="binding site" description="in other chain" evidence="1">
    <location>
        <begin position="72"/>
        <end position="73"/>
    </location>
    <ligand>
        <name>5-phospho-alpha-D-ribose 1-diphosphate</name>
        <dbReference type="ChEBI" id="CHEBI:58017"/>
        <note>ligand shared between dimeric partners</note>
    </ligand>
</feature>
<feature type="binding site" evidence="1">
    <location>
        <position position="99"/>
    </location>
    <ligand>
        <name>5-phospho-alpha-D-ribose 1-diphosphate</name>
        <dbReference type="ChEBI" id="CHEBI:58017"/>
        <note>ligand shared between dimeric partners</note>
    </ligand>
</feature>
<feature type="binding site" description="in other chain" evidence="1">
    <location>
        <position position="100"/>
    </location>
    <ligand>
        <name>5-phospho-alpha-D-ribose 1-diphosphate</name>
        <dbReference type="ChEBI" id="CHEBI:58017"/>
        <note>ligand shared between dimeric partners</note>
    </ligand>
</feature>
<feature type="binding site" evidence="1">
    <location>
        <position position="103"/>
    </location>
    <ligand>
        <name>5-phospho-alpha-D-ribose 1-diphosphate</name>
        <dbReference type="ChEBI" id="CHEBI:58017"/>
        <note>ligand shared between dimeric partners</note>
    </ligand>
</feature>
<feature type="binding site" evidence="1">
    <location>
        <position position="105"/>
    </location>
    <ligand>
        <name>5-phospho-alpha-D-ribose 1-diphosphate</name>
        <dbReference type="ChEBI" id="CHEBI:58017"/>
        <note>ligand shared between dimeric partners</note>
    </ligand>
</feature>
<feature type="binding site" description="in other chain" evidence="1">
    <location>
        <begin position="124"/>
        <end position="132"/>
    </location>
    <ligand>
        <name>5-phospho-alpha-D-ribose 1-diphosphate</name>
        <dbReference type="ChEBI" id="CHEBI:58017"/>
        <note>ligand shared between dimeric partners</note>
    </ligand>
</feature>
<feature type="binding site" evidence="1">
    <location>
        <position position="128"/>
    </location>
    <ligand>
        <name>orotate</name>
        <dbReference type="ChEBI" id="CHEBI:30839"/>
    </ligand>
</feature>
<feature type="binding site" evidence="1">
    <location>
        <position position="156"/>
    </location>
    <ligand>
        <name>orotate</name>
        <dbReference type="ChEBI" id="CHEBI:30839"/>
    </ligand>
</feature>
<sequence length="213" mass="23684">MEQYKHDFIEFALSRNVLKFGEFTLKSGRKSPYFFNAGLFNTGRDLAKLGEFYAQAIQASGLNFDVLFGPAYKGIPIATTVAVALVNQFDVDKPCCFNRKEAKDHGEGGNLIGSPLKGRILLVDDVITAGTAIRESMEIINANQAELAGVLIALNRKEKGKGELSAIQEVERDYGCQVFSIIDFDDLIQFIEKSEQYAPYLASMRAYREQYGV</sequence>
<reference key="1">
    <citation type="submission" date="2008-06" db="EMBL/GenBank/DDBJ databases">
        <title>Genome and proteome analysis of A. pleuropneumoniae serotype 7.</title>
        <authorList>
            <person name="Linke B."/>
            <person name="Buettner F."/>
            <person name="Martinez-Arias R."/>
            <person name="Goesmann A."/>
            <person name="Baltes N."/>
            <person name="Tegetmeyer H."/>
            <person name="Singh M."/>
            <person name="Gerlach G.F."/>
        </authorList>
    </citation>
    <scope>NUCLEOTIDE SEQUENCE [LARGE SCALE GENOMIC DNA]</scope>
    <source>
        <strain>AP76</strain>
    </source>
</reference>
<organism>
    <name type="scientific">Actinobacillus pleuropneumoniae serotype 7 (strain AP76)</name>
    <dbReference type="NCBI Taxonomy" id="537457"/>
    <lineage>
        <taxon>Bacteria</taxon>
        <taxon>Pseudomonadati</taxon>
        <taxon>Pseudomonadota</taxon>
        <taxon>Gammaproteobacteria</taxon>
        <taxon>Pasteurellales</taxon>
        <taxon>Pasteurellaceae</taxon>
        <taxon>Actinobacillus</taxon>
    </lineage>
</organism>
<protein>
    <recommendedName>
        <fullName evidence="1">Orotate phosphoribosyltransferase</fullName>
        <shortName evidence="1">OPRT</shortName>
        <shortName evidence="1">OPRTase</shortName>
        <ecNumber evidence="1">2.4.2.10</ecNumber>
    </recommendedName>
</protein>
<accession>B3H0G3</accession>
<dbReference type="EC" id="2.4.2.10" evidence="1"/>
<dbReference type="EMBL" id="CP001091">
    <property type="protein sequence ID" value="ACE60975.1"/>
    <property type="molecule type" value="Genomic_DNA"/>
</dbReference>
<dbReference type="RefSeq" id="WP_005596245.1">
    <property type="nucleotide sequence ID" value="NC_010939.1"/>
</dbReference>
<dbReference type="SMR" id="B3H0G3"/>
<dbReference type="GeneID" id="48598473"/>
<dbReference type="KEGG" id="apa:APP7_0323"/>
<dbReference type="HOGENOM" id="CLU_074878_0_1_6"/>
<dbReference type="UniPathway" id="UPA00070">
    <property type="reaction ID" value="UER00119"/>
</dbReference>
<dbReference type="Proteomes" id="UP000001226">
    <property type="component" value="Chromosome"/>
</dbReference>
<dbReference type="GO" id="GO:0005737">
    <property type="term" value="C:cytoplasm"/>
    <property type="evidence" value="ECO:0007669"/>
    <property type="project" value="TreeGrafter"/>
</dbReference>
<dbReference type="GO" id="GO:0000287">
    <property type="term" value="F:magnesium ion binding"/>
    <property type="evidence" value="ECO:0007669"/>
    <property type="project" value="UniProtKB-UniRule"/>
</dbReference>
<dbReference type="GO" id="GO:0004588">
    <property type="term" value="F:orotate phosphoribosyltransferase activity"/>
    <property type="evidence" value="ECO:0007669"/>
    <property type="project" value="UniProtKB-UniRule"/>
</dbReference>
<dbReference type="GO" id="GO:0006207">
    <property type="term" value="P:'de novo' pyrimidine nucleobase biosynthetic process"/>
    <property type="evidence" value="ECO:0007669"/>
    <property type="project" value="TreeGrafter"/>
</dbReference>
<dbReference type="GO" id="GO:0044205">
    <property type="term" value="P:'de novo' UMP biosynthetic process"/>
    <property type="evidence" value="ECO:0007669"/>
    <property type="project" value="UniProtKB-UniRule"/>
</dbReference>
<dbReference type="GO" id="GO:0046132">
    <property type="term" value="P:pyrimidine ribonucleoside biosynthetic process"/>
    <property type="evidence" value="ECO:0007669"/>
    <property type="project" value="TreeGrafter"/>
</dbReference>
<dbReference type="CDD" id="cd06223">
    <property type="entry name" value="PRTases_typeI"/>
    <property type="match status" value="1"/>
</dbReference>
<dbReference type="FunFam" id="3.40.50.2020:FF:000008">
    <property type="entry name" value="Orotate phosphoribosyltransferase"/>
    <property type="match status" value="1"/>
</dbReference>
<dbReference type="Gene3D" id="3.40.50.2020">
    <property type="match status" value="1"/>
</dbReference>
<dbReference type="HAMAP" id="MF_01208">
    <property type="entry name" value="PyrE"/>
    <property type="match status" value="1"/>
</dbReference>
<dbReference type="InterPro" id="IPR023031">
    <property type="entry name" value="OPRT"/>
</dbReference>
<dbReference type="InterPro" id="IPR004467">
    <property type="entry name" value="Or_phspho_trans_dom"/>
</dbReference>
<dbReference type="InterPro" id="IPR000836">
    <property type="entry name" value="PRibTrfase_dom"/>
</dbReference>
<dbReference type="InterPro" id="IPR029057">
    <property type="entry name" value="PRTase-like"/>
</dbReference>
<dbReference type="NCBIfam" id="TIGR00336">
    <property type="entry name" value="pyrE"/>
    <property type="match status" value="1"/>
</dbReference>
<dbReference type="PANTHER" id="PTHR46683">
    <property type="entry name" value="OROTATE PHOSPHORIBOSYLTRANSFERASE 1-RELATED"/>
    <property type="match status" value="1"/>
</dbReference>
<dbReference type="PANTHER" id="PTHR46683:SF1">
    <property type="entry name" value="OROTATE PHOSPHORIBOSYLTRANSFERASE 1-RELATED"/>
    <property type="match status" value="1"/>
</dbReference>
<dbReference type="Pfam" id="PF00156">
    <property type="entry name" value="Pribosyltran"/>
    <property type="match status" value="1"/>
</dbReference>
<dbReference type="SUPFAM" id="SSF53271">
    <property type="entry name" value="PRTase-like"/>
    <property type="match status" value="1"/>
</dbReference>
<dbReference type="PROSITE" id="PS00103">
    <property type="entry name" value="PUR_PYR_PR_TRANSFER"/>
    <property type="match status" value="1"/>
</dbReference>
<comment type="function">
    <text evidence="1">Catalyzes the transfer of a ribosyl phosphate group from 5-phosphoribose 1-diphosphate to orotate, leading to the formation of orotidine monophosphate (OMP).</text>
</comment>
<comment type="catalytic activity">
    <reaction evidence="1">
        <text>orotidine 5'-phosphate + diphosphate = orotate + 5-phospho-alpha-D-ribose 1-diphosphate</text>
        <dbReference type="Rhea" id="RHEA:10380"/>
        <dbReference type="ChEBI" id="CHEBI:30839"/>
        <dbReference type="ChEBI" id="CHEBI:33019"/>
        <dbReference type="ChEBI" id="CHEBI:57538"/>
        <dbReference type="ChEBI" id="CHEBI:58017"/>
        <dbReference type="EC" id="2.4.2.10"/>
    </reaction>
</comment>
<comment type="cofactor">
    <cofactor evidence="1">
        <name>Mg(2+)</name>
        <dbReference type="ChEBI" id="CHEBI:18420"/>
    </cofactor>
</comment>
<comment type="pathway">
    <text evidence="1">Pyrimidine metabolism; UMP biosynthesis via de novo pathway; UMP from orotate: step 1/2.</text>
</comment>
<comment type="subunit">
    <text evidence="1">Homodimer.</text>
</comment>
<comment type="similarity">
    <text evidence="1">Belongs to the purine/pyrimidine phosphoribosyltransferase family. PyrE subfamily.</text>
</comment>
<keyword id="KW-0328">Glycosyltransferase</keyword>
<keyword id="KW-0460">Magnesium</keyword>
<keyword id="KW-0665">Pyrimidine biosynthesis</keyword>
<keyword id="KW-0808">Transferase</keyword>
<evidence type="ECO:0000255" key="1">
    <source>
        <dbReference type="HAMAP-Rule" id="MF_01208"/>
    </source>
</evidence>
<name>PYRE_ACTP7</name>
<proteinExistence type="inferred from homology"/>
<gene>
    <name evidence="1" type="primary">pyrE</name>
    <name type="ordered locus">APP7_0323</name>
</gene>